<comment type="catalytic activity">
    <reaction>
        <text>tRNA(Cys) + L-cysteine + ATP = L-cysteinyl-tRNA(Cys) + AMP + diphosphate</text>
        <dbReference type="Rhea" id="RHEA:17773"/>
        <dbReference type="Rhea" id="RHEA-COMP:9661"/>
        <dbReference type="Rhea" id="RHEA-COMP:9679"/>
        <dbReference type="ChEBI" id="CHEBI:30616"/>
        <dbReference type="ChEBI" id="CHEBI:33019"/>
        <dbReference type="ChEBI" id="CHEBI:35235"/>
        <dbReference type="ChEBI" id="CHEBI:78442"/>
        <dbReference type="ChEBI" id="CHEBI:78517"/>
        <dbReference type="ChEBI" id="CHEBI:456215"/>
        <dbReference type="EC" id="6.1.1.16"/>
    </reaction>
</comment>
<comment type="cofactor">
    <cofactor evidence="1">
        <name>Zn(2+)</name>
        <dbReference type="ChEBI" id="CHEBI:29105"/>
    </cofactor>
    <text evidence="1">Binds 1 zinc ion per subunit.</text>
</comment>
<comment type="subunit">
    <text evidence="1">Monomer.</text>
</comment>
<comment type="subcellular location">
    <subcellularLocation>
        <location evidence="1">Cytoplasm</location>
    </subcellularLocation>
</comment>
<comment type="similarity">
    <text evidence="2">Belongs to the class-I aminoacyl-tRNA synthetase family.</text>
</comment>
<dbReference type="EC" id="6.1.1.16"/>
<dbReference type="EMBL" id="AE001439">
    <property type="protein sequence ID" value="AAD06399.1"/>
    <property type="molecule type" value="Genomic_DNA"/>
</dbReference>
<dbReference type="PIR" id="D71884">
    <property type="entry name" value="D71884"/>
</dbReference>
<dbReference type="RefSeq" id="WP_000471348.1">
    <property type="nucleotide sequence ID" value="NC_000921.1"/>
</dbReference>
<dbReference type="SMR" id="Q9ZKW6"/>
<dbReference type="KEGG" id="hpj:jhp_0818"/>
<dbReference type="eggNOG" id="COG0215">
    <property type="taxonomic scope" value="Bacteria"/>
</dbReference>
<dbReference type="Proteomes" id="UP000000804">
    <property type="component" value="Chromosome"/>
</dbReference>
<dbReference type="GO" id="GO:0005829">
    <property type="term" value="C:cytosol"/>
    <property type="evidence" value="ECO:0007669"/>
    <property type="project" value="TreeGrafter"/>
</dbReference>
<dbReference type="GO" id="GO:0005524">
    <property type="term" value="F:ATP binding"/>
    <property type="evidence" value="ECO:0007669"/>
    <property type="project" value="UniProtKB-UniRule"/>
</dbReference>
<dbReference type="GO" id="GO:0004817">
    <property type="term" value="F:cysteine-tRNA ligase activity"/>
    <property type="evidence" value="ECO:0007669"/>
    <property type="project" value="UniProtKB-UniRule"/>
</dbReference>
<dbReference type="GO" id="GO:0008270">
    <property type="term" value="F:zinc ion binding"/>
    <property type="evidence" value="ECO:0007669"/>
    <property type="project" value="UniProtKB-UniRule"/>
</dbReference>
<dbReference type="GO" id="GO:0006423">
    <property type="term" value="P:cysteinyl-tRNA aminoacylation"/>
    <property type="evidence" value="ECO:0007669"/>
    <property type="project" value="UniProtKB-UniRule"/>
</dbReference>
<dbReference type="CDD" id="cd00672">
    <property type="entry name" value="CysRS_core"/>
    <property type="match status" value="1"/>
</dbReference>
<dbReference type="FunFam" id="1.20.120.1910:FF:000013">
    <property type="entry name" value="Cysteine--tRNA ligase"/>
    <property type="match status" value="1"/>
</dbReference>
<dbReference type="FunFam" id="3.40.50.620:FF:000339">
    <property type="entry name" value="Cysteine--tRNA ligase"/>
    <property type="match status" value="1"/>
</dbReference>
<dbReference type="Gene3D" id="1.20.120.1910">
    <property type="entry name" value="Cysteine-tRNA ligase, C-terminal anti-codon recognition domain"/>
    <property type="match status" value="1"/>
</dbReference>
<dbReference type="Gene3D" id="3.40.50.620">
    <property type="entry name" value="HUPs"/>
    <property type="match status" value="1"/>
</dbReference>
<dbReference type="HAMAP" id="MF_00041">
    <property type="entry name" value="Cys_tRNA_synth"/>
    <property type="match status" value="1"/>
</dbReference>
<dbReference type="InterPro" id="IPR015803">
    <property type="entry name" value="Cys-tRNA-ligase"/>
</dbReference>
<dbReference type="InterPro" id="IPR015273">
    <property type="entry name" value="Cys-tRNA-synt_Ia_DALR"/>
</dbReference>
<dbReference type="InterPro" id="IPR024909">
    <property type="entry name" value="Cys-tRNA/MSH_ligase"/>
</dbReference>
<dbReference type="InterPro" id="IPR014729">
    <property type="entry name" value="Rossmann-like_a/b/a_fold"/>
</dbReference>
<dbReference type="InterPro" id="IPR032678">
    <property type="entry name" value="tRNA-synt_1_cat_dom"/>
</dbReference>
<dbReference type="InterPro" id="IPR009080">
    <property type="entry name" value="tRNAsynth_Ia_anticodon-bd"/>
</dbReference>
<dbReference type="NCBIfam" id="TIGR00435">
    <property type="entry name" value="cysS"/>
    <property type="match status" value="1"/>
</dbReference>
<dbReference type="PANTHER" id="PTHR10890:SF3">
    <property type="entry name" value="CYSTEINE--TRNA LIGASE, CYTOPLASMIC"/>
    <property type="match status" value="1"/>
</dbReference>
<dbReference type="PANTHER" id="PTHR10890">
    <property type="entry name" value="CYSTEINYL-TRNA SYNTHETASE"/>
    <property type="match status" value="1"/>
</dbReference>
<dbReference type="Pfam" id="PF09190">
    <property type="entry name" value="DALR_2"/>
    <property type="match status" value="1"/>
</dbReference>
<dbReference type="Pfam" id="PF01406">
    <property type="entry name" value="tRNA-synt_1e"/>
    <property type="match status" value="1"/>
</dbReference>
<dbReference type="PRINTS" id="PR00983">
    <property type="entry name" value="TRNASYNTHCYS"/>
</dbReference>
<dbReference type="SMART" id="SM00840">
    <property type="entry name" value="DALR_2"/>
    <property type="match status" value="1"/>
</dbReference>
<dbReference type="SUPFAM" id="SSF47323">
    <property type="entry name" value="Anticodon-binding domain of a subclass of class I aminoacyl-tRNA synthetases"/>
    <property type="match status" value="1"/>
</dbReference>
<dbReference type="SUPFAM" id="SSF52374">
    <property type="entry name" value="Nucleotidylyl transferase"/>
    <property type="match status" value="1"/>
</dbReference>
<name>SYC_HELPJ</name>
<gene>
    <name type="primary">cysS</name>
    <name type="ordered locus">jhp_0818</name>
</gene>
<organism>
    <name type="scientific">Helicobacter pylori (strain J99 / ATCC 700824)</name>
    <name type="common">Campylobacter pylori J99</name>
    <dbReference type="NCBI Taxonomy" id="85963"/>
    <lineage>
        <taxon>Bacteria</taxon>
        <taxon>Pseudomonadati</taxon>
        <taxon>Campylobacterota</taxon>
        <taxon>Epsilonproteobacteria</taxon>
        <taxon>Campylobacterales</taxon>
        <taxon>Helicobacteraceae</taxon>
        <taxon>Helicobacter</taxon>
    </lineage>
</organism>
<protein>
    <recommendedName>
        <fullName>Cysteine--tRNA ligase</fullName>
        <ecNumber>6.1.1.16</ecNumber>
    </recommendedName>
    <alternativeName>
        <fullName>Cysteinyl-tRNA synthetase</fullName>
        <shortName>CysRS</shortName>
    </alternativeName>
</protein>
<reference key="1">
    <citation type="journal article" date="1999" name="Nature">
        <title>Genomic sequence comparison of two unrelated isolates of the human gastric pathogen Helicobacter pylori.</title>
        <authorList>
            <person name="Alm R.A."/>
            <person name="Ling L.-S.L."/>
            <person name="Moir D.T."/>
            <person name="King B.L."/>
            <person name="Brown E.D."/>
            <person name="Doig P.C."/>
            <person name="Smith D.R."/>
            <person name="Noonan B."/>
            <person name="Guild B.C."/>
            <person name="deJonge B.L."/>
            <person name="Carmel G."/>
            <person name="Tummino P.J."/>
            <person name="Caruso A."/>
            <person name="Uria-Nickelsen M."/>
            <person name="Mills D.M."/>
            <person name="Ives C."/>
            <person name="Gibson R."/>
            <person name="Merberg D."/>
            <person name="Mills S.D."/>
            <person name="Jiang Q."/>
            <person name="Taylor D.E."/>
            <person name="Vovis G.F."/>
            <person name="Trust T.J."/>
        </authorList>
    </citation>
    <scope>NUCLEOTIDE SEQUENCE [LARGE SCALE GENOMIC DNA]</scope>
    <source>
        <strain>J99 / ATCC 700824</strain>
    </source>
</reference>
<feature type="chain" id="PRO_0000159410" description="Cysteine--tRNA ligase">
    <location>
        <begin position="1"/>
        <end position="465"/>
    </location>
</feature>
<feature type="short sequence motif" description="'HIGH' region">
    <location>
        <begin position="29"/>
        <end position="39"/>
    </location>
</feature>
<feature type="short sequence motif" description="'KMSKS' region">
    <location>
        <begin position="269"/>
        <end position="273"/>
    </location>
</feature>
<feature type="binding site" evidence="1">
    <location>
        <position position="27"/>
    </location>
    <ligand>
        <name>Zn(2+)</name>
        <dbReference type="ChEBI" id="CHEBI:29105"/>
    </ligand>
</feature>
<feature type="binding site" evidence="1">
    <location>
        <position position="207"/>
    </location>
    <ligand>
        <name>Zn(2+)</name>
        <dbReference type="ChEBI" id="CHEBI:29105"/>
    </ligand>
</feature>
<feature type="binding site" evidence="1">
    <location>
        <position position="237"/>
    </location>
    <ligand>
        <name>Zn(2+)</name>
        <dbReference type="ChEBI" id="CHEBI:29105"/>
    </ligand>
</feature>
<feature type="binding site" evidence="1">
    <location>
        <position position="241"/>
    </location>
    <ligand>
        <name>Zn(2+)</name>
        <dbReference type="ChEBI" id="CHEBI:29105"/>
    </ligand>
</feature>
<feature type="binding site" evidence="1">
    <location>
        <position position="272"/>
    </location>
    <ligand>
        <name>ATP</name>
        <dbReference type="ChEBI" id="CHEBI:30616"/>
    </ligand>
</feature>
<accession>Q9ZKW6</accession>
<proteinExistence type="inferred from homology"/>
<evidence type="ECO:0000250" key="1"/>
<evidence type="ECO:0000305" key="2"/>
<keyword id="KW-0030">Aminoacyl-tRNA synthetase</keyword>
<keyword id="KW-0067">ATP-binding</keyword>
<keyword id="KW-0963">Cytoplasm</keyword>
<keyword id="KW-0436">Ligase</keyword>
<keyword id="KW-0479">Metal-binding</keyword>
<keyword id="KW-0547">Nucleotide-binding</keyword>
<keyword id="KW-0648">Protein biosynthesis</keyword>
<keyword id="KW-0862">Zinc</keyword>
<sequence length="465" mass="53306">MFIYDTKLKQKVPFEPLVHNKANIYVCGPTVYDDAHLGHARSAIAFDLLRRTLELSGYEVVLVRNFTDIDDKIINKAFKENKSIQELSSIYIESYTRDLNALNVKQPSLEPKASEYLDAMVRMIETLLEKNFAYRVSNGDIYLDTSKDKDYGSLSMHNSSVEFSRIGLVQEKRLEQDFVLWKSYKGDNDVGFDSPLGKGRPGWHIECSSMVFETLALANAPYQIDIHAGGTDLLFPHHENEACQTRCAFGVEIAKYWMHNGFVNINNEKMSKSLGNSFFIKDALKNYDGEILRNYLLGVHYRSVLNFNEEDLLMSKKRLDKIYRLKQRVLGTLGGINPNFKKEILECMQDDLNVSKALSVLESMLSSTNEKLDQNPKNKALKGEILANLKFIEELLGIGFKDPSAYFQLGVSESEKQEIENKIEERKRAKEQKDFLKADSIREELLQQKIALMDTPQGTIWEKLF</sequence>